<protein>
    <recommendedName>
        <fullName>E3 ubiquitin ligase TRIM40</fullName>
        <ecNumber evidence="2">2.3.2.27</ecNumber>
    </recommendedName>
    <alternativeName>
        <fullName>Probable E3 NEDD8-protein ligase</fullName>
    </alternativeName>
</protein>
<evidence type="ECO:0000250" key="1"/>
<evidence type="ECO:0000250" key="2">
    <source>
        <dbReference type="UniProtKB" id="Q6P9F5"/>
    </source>
</evidence>
<evidence type="ECO:0000255" key="3"/>
<evidence type="ECO:0000255" key="4">
    <source>
        <dbReference type="PROSITE-ProRule" id="PRU00024"/>
    </source>
</evidence>
<evidence type="ECO:0000255" key="5">
    <source>
        <dbReference type="PROSITE-ProRule" id="PRU00175"/>
    </source>
</evidence>
<evidence type="ECO:0000269" key="6">
    <source>
    </source>
</evidence>
<evidence type="ECO:0000305" key="7"/>
<accession>Q1XHT8</accession>
<accession>Q1XHT9</accession>
<gene>
    <name type="primary">TRIM40</name>
</gene>
<sequence length="229" mass="26004">MIPLQKDNQEEGVCPICQESLKEAVSTNCGHLFCRVCLTQHVEKASASGVFCCPLCRKPCSEEVLGTGYICPNHQKRVCRFCEESRLLLCVECLVSPEHMSHHELTIENALSHYKERLNRRSRKLRKDIAELQRLKAQQEKKLQALQQWLGQLEHMPAEAARILDISRAVTQLSSLVIDLERTAKELDTNTLKNAGDLLNRSAPQKLEVIYPQLEKGVSELLLQPPQKL</sequence>
<name>TRI40_PANTR</name>
<keyword id="KW-0175">Coiled coil</keyword>
<keyword id="KW-0479">Metal-binding</keyword>
<keyword id="KW-1185">Reference proteome</keyword>
<keyword id="KW-0808">Transferase</keyword>
<keyword id="KW-0833">Ubl conjugation pathway</keyword>
<keyword id="KW-0862">Zinc</keyword>
<keyword id="KW-0863">Zinc-finger</keyword>
<dbReference type="EC" id="2.3.2.27" evidence="2"/>
<dbReference type="EMBL" id="AB210209">
    <property type="protein sequence ID" value="BAE92831.1"/>
    <property type="molecule type" value="Genomic_DNA"/>
</dbReference>
<dbReference type="EMBL" id="AB210210">
    <property type="protein sequence ID" value="BAE92832.1"/>
    <property type="molecule type" value="Genomic_DNA"/>
</dbReference>
<dbReference type="RefSeq" id="NP_001065286.1">
    <property type="nucleotide sequence ID" value="NM_001071818.1"/>
</dbReference>
<dbReference type="SMR" id="Q1XHT8"/>
<dbReference type="STRING" id="9598.ENSPTRP00000054619"/>
<dbReference type="PaxDb" id="9598-ENSPTRP00000054619"/>
<dbReference type="GeneID" id="742243"/>
<dbReference type="KEGG" id="ptr:742243"/>
<dbReference type="CTD" id="135644"/>
<dbReference type="eggNOG" id="KOG2177">
    <property type="taxonomic scope" value="Eukaryota"/>
</dbReference>
<dbReference type="HOGENOM" id="CLU_013137_3_0_1"/>
<dbReference type="InParanoid" id="Q1XHT8"/>
<dbReference type="TreeFam" id="TF333491"/>
<dbReference type="Proteomes" id="UP000002277">
    <property type="component" value="Unplaced"/>
</dbReference>
<dbReference type="GO" id="GO:0005737">
    <property type="term" value="C:cytoplasm"/>
    <property type="evidence" value="ECO:0000318"/>
    <property type="project" value="GO_Central"/>
</dbReference>
<dbReference type="GO" id="GO:0061630">
    <property type="term" value="F:ubiquitin protein ligase activity"/>
    <property type="evidence" value="ECO:0000318"/>
    <property type="project" value="GO_Central"/>
</dbReference>
<dbReference type="GO" id="GO:0008270">
    <property type="term" value="F:zinc ion binding"/>
    <property type="evidence" value="ECO:0007669"/>
    <property type="project" value="UniProtKB-KW"/>
</dbReference>
<dbReference type="GO" id="GO:0045087">
    <property type="term" value="P:innate immune response"/>
    <property type="evidence" value="ECO:0000318"/>
    <property type="project" value="GO_Central"/>
</dbReference>
<dbReference type="CDD" id="cd19781">
    <property type="entry name" value="Bbox2_TRIM40_C-V"/>
    <property type="match status" value="1"/>
</dbReference>
<dbReference type="CDD" id="cd16583">
    <property type="entry name" value="RING-HC_TRIM40-C-V"/>
    <property type="match status" value="1"/>
</dbReference>
<dbReference type="FunFam" id="3.30.160.60:FF:003062">
    <property type="entry name" value="Tripartite motif-containing protein 40"/>
    <property type="match status" value="1"/>
</dbReference>
<dbReference type="FunFam" id="3.30.40.10:FF:000775">
    <property type="entry name" value="Tripartite motif-containing protein 40"/>
    <property type="match status" value="1"/>
</dbReference>
<dbReference type="Gene3D" id="3.30.160.60">
    <property type="entry name" value="Classic Zinc Finger"/>
    <property type="match status" value="1"/>
</dbReference>
<dbReference type="Gene3D" id="3.30.40.10">
    <property type="entry name" value="Zinc/RING finger domain, C3HC4 (zinc finger)"/>
    <property type="match status" value="1"/>
</dbReference>
<dbReference type="InterPro" id="IPR050143">
    <property type="entry name" value="TRIM/RBCC"/>
</dbReference>
<dbReference type="InterPro" id="IPR000315">
    <property type="entry name" value="Znf_B-box"/>
</dbReference>
<dbReference type="InterPro" id="IPR018957">
    <property type="entry name" value="Znf_C3HC4_RING-type"/>
</dbReference>
<dbReference type="InterPro" id="IPR001841">
    <property type="entry name" value="Znf_RING"/>
</dbReference>
<dbReference type="InterPro" id="IPR013083">
    <property type="entry name" value="Znf_RING/FYVE/PHD"/>
</dbReference>
<dbReference type="InterPro" id="IPR017907">
    <property type="entry name" value="Znf_RING_CS"/>
</dbReference>
<dbReference type="PANTHER" id="PTHR24103">
    <property type="entry name" value="E3 UBIQUITIN-PROTEIN LIGASE TRIM"/>
    <property type="match status" value="1"/>
</dbReference>
<dbReference type="Pfam" id="PF00097">
    <property type="entry name" value="zf-C3HC4"/>
    <property type="match status" value="1"/>
</dbReference>
<dbReference type="SMART" id="SM00184">
    <property type="entry name" value="RING"/>
    <property type="match status" value="1"/>
</dbReference>
<dbReference type="SUPFAM" id="SSF57845">
    <property type="entry name" value="B-box zinc-binding domain"/>
    <property type="match status" value="1"/>
</dbReference>
<dbReference type="SUPFAM" id="SSF57850">
    <property type="entry name" value="RING/U-box"/>
    <property type="match status" value="1"/>
</dbReference>
<dbReference type="PROSITE" id="PS50119">
    <property type="entry name" value="ZF_BBOX"/>
    <property type="match status" value="1"/>
</dbReference>
<dbReference type="PROSITE" id="PS00518">
    <property type="entry name" value="ZF_RING_1"/>
    <property type="match status" value="1"/>
</dbReference>
<dbReference type="PROSITE" id="PS50089">
    <property type="entry name" value="ZF_RING_2"/>
    <property type="match status" value="1"/>
</dbReference>
<comment type="function">
    <text evidence="2">E3 ubiquitin-protein ligase that plays a role in the limitation of the innate immune response. Mediates inhibition of the RLR signaling pathway by ubiquitinating RIGI and IFIH1 receptors, leading to their proteasomal degradation. Also promotes the neddylation of IKBKG/NEMO, stabilizing NFKBIA, and thereby inhibiting of NF-kappa-B nuclear translocation and activation.</text>
</comment>
<comment type="catalytic activity">
    <reaction evidence="2">
        <text>S-ubiquitinyl-[E2 ubiquitin-conjugating enzyme]-L-cysteine + [acceptor protein]-L-lysine = [E2 ubiquitin-conjugating enzyme]-L-cysteine + N(6)-ubiquitinyl-[acceptor protein]-L-lysine.</text>
        <dbReference type="EC" id="2.3.2.27"/>
    </reaction>
</comment>
<comment type="subunit">
    <text evidence="1">Interacts with NEDD8.</text>
</comment>
<comment type="similarity">
    <text evidence="7">Belongs to the TRIM/RBCC family.</text>
</comment>
<feature type="chain" id="PRO_0000235191" description="E3 ubiquitin ligase TRIM40">
    <location>
        <begin position="1"/>
        <end position="229"/>
    </location>
</feature>
<feature type="zinc finger region" description="RING-type" evidence="5">
    <location>
        <begin position="14"/>
        <end position="57"/>
    </location>
</feature>
<feature type="zinc finger region" description="B box-type" evidence="4">
    <location>
        <begin position="66"/>
        <end position="107"/>
    </location>
</feature>
<feature type="coiled-coil region" evidence="3">
    <location>
        <begin position="107"/>
        <end position="154"/>
    </location>
</feature>
<feature type="binding site" evidence="4">
    <location>
        <position position="71"/>
    </location>
    <ligand>
        <name>Zn(2+)</name>
        <dbReference type="ChEBI" id="CHEBI:29105"/>
    </ligand>
</feature>
<feature type="binding site" evidence="4">
    <location>
        <position position="74"/>
    </location>
    <ligand>
        <name>Zn(2+)</name>
        <dbReference type="ChEBI" id="CHEBI:29105"/>
    </ligand>
</feature>
<feature type="binding site" evidence="4">
    <location>
        <position position="93"/>
    </location>
    <ligand>
        <name>Zn(2+)</name>
        <dbReference type="ChEBI" id="CHEBI:29105"/>
    </ligand>
</feature>
<feature type="binding site" evidence="4">
    <location>
        <position position="99"/>
    </location>
    <ligand>
        <name>Zn(2+)</name>
        <dbReference type="ChEBI" id="CHEBI:29105"/>
    </ligand>
</feature>
<feature type="sequence variant" id="VAR_026387" evidence="6">
    <original>Q</original>
    <variation>K</variation>
    <location>
        <position position="5"/>
    </location>
</feature>
<organism>
    <name type="scientific">Pan troglodytes</name>
    <name type="common">Chimpanzee</name>
    <dbReference type="NCBI Taxonomy" id="9598"/>
    <lineage>
        <taxon>Eukaryota</taxon>
        <taxon>Metazoa</taxon>
        <taxon>Chordata</taxon>
        <taxon>Craniata</taxon>
        <taxon>Vertebrata</taxon>
        <taxon>Euteleostomi</taxon>
        <taxon>Mammalia</taxon>
        <taxon>Eutheria</taxon>
        <taxon>Euarchontoglires</taxon>
        <taxon>Primates</taxon>
        <taxon>Haplorrhini</taxon>
        <taxon>Catarrhini</taxon>
        <taxon>Hominidae</taxon>
        <taxon>Pan</taxon>
    </lineage>
</organism>
<reference key="1">
    <citation type="journal article" date="2006" name="Genetics">
        <title>Rapid evolution of major histocompatibility complex class I genes in primates generates new disease alleles in humans via hitchhiking diversity.</title>
        <authorList>
            <person name="Shiina T."/>
            <person name="Ota M."/>
            <person name="Shimizu S."/>
            <person name="Katsuyama Y."/>
            <person name="Hashimoto N."/>
            <person name="Takasu M."/>
            <person name="Anzai T."/>
            <person name="Kulski J.K."/>
            <person name="Kikkawa E."/>
            <person name="Naruse T."/>
            <person name="Kimura N."/>
            <person name="Yanagiya K."/>
            <person name="Watanabe A."/>
            <person name="Hosomichi K."/>
            <person name="Kohara S."/>
            <person name="Iwamoto C."/>
            <person name="Umehara Y."/>
            <person name="Meyer A."/>
            <person name="Wanner V."/>
            <person name="Sano K."/>
            <person name="Macquin C."/>
            <person name="Ikeo K."/>
            <person name="Tokunaga K."/>
            <person name="Gojobori T."/>
            <person name="Inoko H."/>
            <person name="Bahram S."/>
        </authorList>
    </citation>
    <scope>NUCLEOTIDE SEQUENCE [LARGE SCALE GENOMIC DNA]</scope>
    <scope>VARIANT LYS-5</scope>
</reference>
<proteinExistence type="inferred from homology"/>